<evidence type="ECO:0000250" key="1">
    <source>
        <dbReference type="UniProtKB" id="Q6Z1J6"/>
    </source>
</evidence>
<evidence type="ECO:0000255" key="2">
    <source>
        <dbReference type="HAMAP-Rule" id="MF_03167"/>
    </source>
</evidence>
<evidence type="ECO:0000255" key="3">
    <source>
        <dbReference type="PROSITE-ProRule" id="PRU01047"/>
    </source>
</evidence>
<evidence type="ECO:0000255" key="4">
    <source>
        <dbReference type="PROSITE-ProRule" id="PRU01228"/>
    </source>
</evidence>
<evidence type="ECO:0000269" key="5">
    <source>
    </source>
</evidence>
<evidence type="ECO:0000269" key="6">
    <source>
    </source>
</evidence>
<evidence type="ECO:0000303" key="7">
    <source>
    </source>
</evidence>
<evidence type="ECO:0000305" key="8"/>
<evidence type="ECO:0000312" key="9">
    <source>
        <dbReference type="Araport" id="AT1G30580"/>
    </source>
</evidence>
<evidence type="ECO:0000312" key="10">
    <source>
        <dbReference type="EMBL" id="AAD25745.1"/>
    </source>
</evidence>
<evidence type="ECO:0000312" key="11">
    <source>
        <dbReference type="Proteomes" id="UP000006548"/>
    </source>
</evidence>
<evidence type="ECO:0007829" key="12">
    <source>
        <dbReference type="PDB" id="7Y9I"/>
    </source>
</evidence>
<keyword id="KW-0002">3D-structure</keyword>
<keyword id="KW-0067">ATP-binding</keyword>
<keyword id="KW-0963">Cytoplasm</keyword>
<keyword id="KW-0342">GTP-binding</keyword>
<keyword id="KW-0378">Hydrolase</keyword>
<keyword id="KW-0460">Magnesium</keyword>
<keyword id="KW-0479">Metal-binding</keyword>
<keyword id="KW-0547">Nucleotide-binding</keyword>
<keyword id="KW-0611">Plant defense</keyword>
<keyword id="KW-1185">Reference proteome</keyword>
<protein>
    <recommendedName>
        <fullName evidence="2">Obg-like ATPase 1</fullName>
    </recommendedName>
    <alternativeName>
        <fullName evidence="7">Ribosome-binding ATPase YchF</fullName>
        <shortName evidence="7">AtYchF1</shortName>
    </alternativeName>
</protein>
<accession>Q9SA73</accession>
<accession>Q8LDR5</accession>
<organism evidence="11">
    <name type="scientific">Arabidopsis thaliana</name>
    <name type="common">Mouse-ear cress</name>
    <dbReference type="NCBI Taxonomy" id="3702"/>
    <lineage>
        <taxon>Eukaryota</taxon>
        <taxon>Viridiplantae</taxon>
        <taxon>Streptophyta</taxon>
        <taxon>Embryophyta</taxon>
        <taxon>Tracheophyta</taxon>
        <taxon>Spermatophyta</taxon>
        <taxon>Magnoliopsida</taxon>
        <taxon>eudicotyledons</taxon>
        <taxon>Gunneridae</taxon>
        <taxon>Pentapetalae</taxon>
        <taxon>rosids</taxon>
        <taxon>malvids</taxon>
        <taxon>Brassicales</taxon>
        <taxon>Brassicaceae</taxon>
        <taxon>Camelineae</taxon>
        <taxon>Arabidopsis</taxon>
    </lineage>
</organism>
<reference key="1">
    <citation type="journal article" date="2000" name="Nature">
        <title>Sequence and analysis of chromosome 1 of the plant Arabidopsis thaliana.</title>
        <authorList>
            <person name="Theologis A."/>
            <person name="Ecker J.R."/>
            <person name="Palm C.J."/>
            <person name="Federspiel N.A."/>
            <person name="Kaul S."/>
            <person name="White O."/>
            <person name="Alonso J."/>
            <person name="Altafi H."/>
            <person name="Araujo R."/>
            <person name="Bowman C.L."/>
            <person name="Brooks S.Y."/>
            <person name="Buehler E."/>
            <person name="Chan A."/>
            <person name="Chao Q."/>
            <person name="Chen H."/>
            <person name="Cheuk R.F."/>
            <person name="Chin C.W."/>
            <person name="Chung M.K."/>
            <person name="Conn L."/>
            <person name="Conway A.B."/>
            <person name="Conway A.R."/>
            <person name="Creasy T.H."/>
            <person name="Dewar K."/>
            <person name="Dunn P."/>
            <person name="Etgu P."/>
            <person name="Feldblyum T.V."/>
            <person name="Feng J.-D."/>
            <person name="Fong B."/>
            <person name="Fujii C.Y."/>
            <person name="Gill J.E."/>
            <person name="Goldsmith A.D."/>
            <person name="Haas B."/>
            <person name="Hansen N.F."/>
            <person name="Hughes B."/>
            <person name="Huizar L."/>
            <person name="Hunter J.L."/>
            <person name="Jenkins J."/>
            <person name="Johnson-Hopson C."/>
            <person name="Khan S."/>
            <person name="Khaykin E."/>
            <person name="Kim C.J."/>
            <person name="Koo H.L."/>
            <person name="Kremenetskaia I."/>
            <person name="Kurtz D.B."/>
            <person name="Kwan A."/>
            <person name="Lam B."/>
            <person name="Langin-Hooper S."/>
            <person name="Lee A."/>
            <person name="Lee J.M."/>
            <person name="Lenz C.A."/>
            <person name="Li J.H."/>
            <person name="Li Y.-P."/>
            <person name="Lin X."/>
            <person name="Liu S.X."/>
            <person name="Liu Z.A."/>
            <person name="Luros J.S."/>
            <person name="Maiti R."/>
            <person name="Marziali A."/>
            <person name="Militscher J."/>
            <person name="Miranda M."/>
            <person name="Nguyen M."/>
            <person name="Nierman W.C."/>
            <person name="Osborne B.I."/>
            <person name="Pai G."/>
            <person name="Peterson J."/>
            <person name="Pham P.K."/>
            <person name="Rizzo M."/>
            <person name="Rooney T."/>
            <person name="Rowley D."/>
            <person name="Sakano H."/>
            <person name="Salzberg S.L."/>
            <person name="Schwartz J.R."/>
            <person name="Shinn P."/>
            <person name="Southwick A.M."/>
            <person name="Sun H."/>
            <person name="Tallon L.J."/>
            <person name="Tambunga G."/>
            <person name="Toriumi M.J."/>
            <person name="Town C.D."/>
            <person name="Utterback T."/>
            <person name="Van Aken S."/>
            <person name="Vaysberg M."/>
            <person name="Vysotskaia V.S."/>
            <person name="Walker M."/>
            <person name="Wu D."/>
            <person name="Yu G."/>
            <person name="Fraser C.M."/>
            <person name="Venter J.C."/>
            <person name="Davis R.W."/>
        </authorList>
    </citation>
    <scope>NUCLEOTIDE SEQUENCE [LARGE SCALE GENOMIC DNA]</scope>
    <source>
        <strain>cv. Columbia</strain>
    </source>
</reference>
<reference key="2">
    <citation type="journal article" date="2017" name="Plant J.">
        <title>Araport11: a complete reannotation of the Arabidopsis thaliana reference genome.</title>
        <authorList>
            <person name="Cheng C.Y."/>
            <person name="Krishnakumar V."/>
            <person name="Chan A.P."/>
            <person name="Thibaud-Nissen F."/>
            <person name="Schobel S."/>
            <person name="Town C.D."/>
        </authorList>
    </citation>
    <scope>GENOME REANNOTATION</scope>
    <source>
        <strain>cv. Columbia</strain>
    </source>
</reference>
<reference key="3">
    <citation type="submission" date="2006-06" db="EMBL/GenBank/DDBJ databases">
        <title>Arabidopsis ORF clones.</title>
        <authorList>
            <person name="Shinn P."/>
            <person name="Chen H."/>
            <person name="Kim C.J."/>
            <person name="Quinitio C."/>
            <person name="Ecker J.R."/>
        </authorList>
    </citation>
    <scope>NUCLEOTIDE SEQUENCE [LARGE SCALE MRNA]</scope>
    <source>
        <strain>cv. Columbia</strain>
    </source>
</reference>
<reference key="4">
    <citation type="submission" date="2002-03" db="EMBL/GenBank/DDBJ databases">
        <title>Full-length cDNA from Arabidopsis thaliana.</title>
        <authorList>
            <person name="Brover V.V."/>
            <person name="Troukhan M.E."/>
            <person name="Alexandrov N.A."/>
            <person name="Lu Y.-P."/>
            <person name="Flavell R.B."/>
            <person name="Feldmann K.A."/>
        </authorList>
    </citation>
    <scope>NUCLEOTIDE SEQUENCE [LARGE SCALE MRNA]</scope>
</reference>
<reference key="5">
    <citation type="journal article" date="2013" name="Plant Cell Environ.">
        <title>The unconventional P-loop NTPase OsYchF1 and its regulator OsGAP1 play opposite roles in salinity stress tolerance.</title>
        <authorList>
            <person name="Cheung M.-Y."/>
            <person name="Li M.-W."/>
            <person name="Yung Y.-L."/>
            <person name="Wen C.-Q."/>
            <person name="Lam H.-M."/>
        </authorList>
    </citation>
    <scope>FUNCTION</scope>
    <scope>DISRUPTION PHENOTYPE</scope>
    <scope>INTERACTION WITH CAR4/GAP1</scope>
    <scope>SUBCELLULAR LOCATION</scope>
    <source>
        <strain>cv. Col-2</strain>
        <strain>cv. Columbia</strain>
    </source>
</reference>
<reference key="6">
    <citation type="journal article" date="2016" name="Proc. Natl. Acad. Sci. U.S.A.">
        <title>ATP binding by the P-loop NTPase OsYchF1 (an unconventional G protein) contributes to biotic but not abiotic stress responses.</title>
        <authorList>
            <person name="Cheung M.Y."/>
            <person name="Li X."/>
            <person name="Miao R."/>
            <person name="Fong Y.H."/>
            <person name="Li K.P."/>
            <person name="Yung Y.L."/>
            <person name="Yu M.H."/>
            <person name="Wong K.B."/>
            <person name="Chen Z."/>
            <person name="Lam H.M."/>
        </authorList>
    </citation>
    <scope>FUNCTION</scope>
    <scope>MUTAGENESIS OF 231-LEU--GLU-233</scope>
</reference>
<sequence length="394" mass="44471">MPPKAKAKDAGPVERPILGRFSSHLKIGIVGLPNVGKSTLFNTLTKLSIPAENFPFCTIEPNEARVNIPDERFDWLCQTYKPKSEIPAFLEIHDIAGLVRGAHEGQGLGNNFLSHIRAVDGIFHVLRAFEDADIIHVDDIVDPVRDLETITEELRLKDIEFVGKKIDDVEKSMKRSNDKQLKIELELLQKVKAWLEDGKDVRFGDWKTADIEILNTFQLLSAKPVVYLINLNERDYQRKKNKFLPKIHAWVQEHGGDTMIPFSGVFERSLADMAPDEAAKYCEENKLQSALPRIIKTGFSAINLIYFFTAGPDEVKCWQIRRQSKAPQAAGAIHTDFERGFICAEVMKFEDLKELGNEPAVKAAGKYRQEGKTYVVQDGDIIFFKFNVSGGGKK</sequence>
<name>OLA1_ARATH</name>
<proteinExistence type="evidence at protein level"/>
<dbReference type="EMBL" id="AC007060">
    <property type="protein sequence ID" value="AAD25745.1"/>
    <property type="molecule type" value="Genomic_DNA"/>
</dbReference>
<dbReference type="EMBL" id="CP002684">
    <property type="protein sequence ID" value="AEE31246.1"/>
    <property type="molecule type" value="Genomic_DNA"/>
</dbReference>
<dbReference type="EMBL" id="BT025965">
    <property type="protein sequence ID" value="ABG25054.1"/>
    <property type="molecule type" value="mRNA"/>
</dbReference>
<dbReference type="EMBL" id="AY085845">
    <property type="protein sequence ID" value="AAM63059.1"/>
    <property type="molecule type" value="mRNA"/>
</dbReference>
<dbReference type="PIR" id="A86431">
    <property type="entry name" value="A86431"/>
</dbReference>
<dbReference type="RefSeq" id="NP_174346.1">
    <property type="nucleotide sequence ID" value="NM_102795.3"/>
</dbReference>
<dbReference type="PDB" id="7Y9I">
    <property type="method" value="X-ray"/>
    <property type="resolution" value="2.07 A"/>
    <property type="chains" value="A=1-394"/>
</dbReference>
<dbReference type="PDBsum" id="7Y9I"/>
<dbReference type="SMR" id="Q9SA73"/>
<dbReference type="FunCoup" id="Q9SA73">
    <property type="interactions" value="3912"/>
</dbReference>
<dbReference type="STRING" id="3702.Q9SA73"/>
<dbReference type="iPTMnet" id="Q9SA73"/>
<dbReference type="MetOSite" id="Q9SA73"/>
<dbReference type="PaxDb" id="3702-AT1G30580.1"/>
<dbReference type="ProteomicsDB" id="250903"/>
<dbReference type="EnsemblPlants" id="AT1G30580.1">
    <property type="protein sequence ID" value="AT1G30580.1"/>
    <property type="gene ID" value="AT1G30580"/>
</dbReference>
<dbReference type="GeneID" id="839938"/>
<dbReference type="Gramene" id="AT1G30580.1">
    <property type="protein sequence ID" value="AT1G30580.1"/>
    <property type="gene ID" value="AT1G30580"/>
</dbReference>
<dbReference type="KEGG" id="ath:AT1G30580"/>
<dbReference type="Araport" id="AT1G30580"/>
<dbReference type="TAIR" id="AT1G30580">
    <property type="gene designation" value="ENGD-1"/>
</dbReference>
<dbReference type="eggNOG" id="KOG1491">
    <property type="taxonomic scope" value="Eukaryota"/>
</dbReference>
<dbReference type="HOGENOM" id="CLU_018395_1_0_1"/>
<dbReference type="InParanoid" id="Q9SA73"/>
<dbReference type="OMA" id="DFHDLCE"/>
<dbReference type="OrthoDB" id="424823at2759"/>
<dbReference type="PhylomeDB" id="Q9SA73"/>
<dbReference type="PRO" id="PR:Q9SA73"/>
<dbReference type="Proteomes" id="UP000006548">
    <property type="component" value="Chromosome 1"/>
</dbReference>
<dbReference type="ExpressionAtlas" id="Q9SA73">
    <property type="expression patterns" value="baseline and differential"/>
</dbReference>
<dbReference type="GO" id="GO:0005829">
    <property type="term" value="C:cytosol"/>
    <property type="evidence" value="ECO:0000314"/>
    <property type="project" value="UniProtKB"/>
</dbReference>
<dbReference type="GO" id="GO:0005634">
    <property type="term" value="C:nucleus"/>
    <property type="evidence" value="ECO:0007005"/>
    <property type="project" value="TAIR"/>
</dbReference>
<dbReference type="GO" id="GO:0009506">
    <property type="term" value="C:plasmodesma"/>
    <property type="evidence" value="ECO:0007005"/>
    <property type="project" value="TAIR"/>
</dbReference>
<dbReference type="GO" id="GO:0005524">
    <property type="term" value="F:ATP binding"/>
    <property type="evidence" value="ECO:0000314"/>
    <property type="project" value="UniProtKB"/>
</dbReference>
<dbReference type="GO" id="GO:0016887">
    <property type="term" value="F:ATP hydrolysis activity"/>
    <property type="evidence" value="ECO:0007669"/>
    <property type="project" value="UniProtKB-UniRule"/>
</dbReference>
<dbReference type="GO" id="GO:0005525">
    <property type="term" value="F:GTP binding"/>
    <property type="evidence" value="ECO:0000314"/>
    <property type="project" value="UniProtKB"/>
</dbReference>
<dbReference type="GO" id="GO:0003924">
    <property type="term" value="F:GTPase activity"/>
    <property type="evidence" value="ECO:0007669"/>
    <property type="project" value="EnsemblPlants"/>
</dbReference>
<dbReference type="GO" id="GO:0046872">
    <property type="term" value="F:metal ion binding"/>
    <property type="evidence" value="ECO:0007669"/>
    <property type="project" value="UniProtKB-KW"/>
</dbReference>
<dbReference type="GO" id="GO:0043023">
    <property type="term" value="F:ribosomal large subunit binding"/>
    <property type="evidence" value="ECO:0007669"/>
    <property type="project" value="UniProtKB-UniRule"/>
</dbReference>
<dbReference type="GO" id="GO:0006952">
    <property type="term" value="P:defense response"/>
    <property type="evidence" value="ECO:0007669"/>
    <property type="project" value="UniProtKB-KW"/>
</dbReference>
<dbReference type="GO" id="GO:1900425">
    <property type="term" value="P:negative regulation of defense response to bacterium"/>
    <property type="evidence" value="ECO:0007669"/>
    <property type="project" value="EnsemblPlants"/>
</dbReference>
<dbReference type="GO" id="GO:1901001">
    <property type="term" value="P:negative regulation of response to salt stress"/>
    <property type="evidence" value="ECO:0000315"/>
    <property type="project" value="UniProtKB"/>
</dbReference>
<dbReference type="GO" id="GO:0009651">
    <property type="term" value="P:response to salt stress"/>
    <property type="evidence" value="ECO:0000314"/>
    <property type="project" value="UniProtKB"/>
</dbReference>
<dbReference type="CDD" id="cd04867">
    <property type="entry name" value="TGS_YchF_OLA1"/>
    <property type="match status" value="1"/>
</dbReference>
<dbReference type="CDD" id="cd01900">
    <property type="entry name" value="YchF"/>
    <property type="match status" value="1"/>
</dbReference>
<dbReference type="FunFam" id="1.10.150.300:FF:000003">
    <property type="entry name" value="Obg-like ATPase 1"/>
    <property type="match status" value="1"/>
</dbReference>
<dbReference type="FunFam" id="3.10.20.30:FF:000001">
    <property type="entry name" value="Ribosome-binding ATPase YchF"/>
    <property type="match status" value="1"/>
</dbReference>
<dbReference type="Gene3D" id="3.10.20.30">
    <property type="match status" value="1"/>
</dbReference>
<dbReference type="Gene3D" id="3.40.50.300">
    <property type="entry name" value="P-loop containing nucleotide triphosphate hydrolases"/>
    <property type="match status" value="1"/>
</dbReference>
<dbReference type="Gene3D" id="1.10.150.300">
    <property type="entry name" value="TGS-like domain"/>
    <property type="match status" value="1"/>
</dbReference>
<dbReference type="HAMAP" id="MF_00944">
    <property type="entry name" value="YchF_OLA1_ATPase"/>
    <property type="match status" value="1"/>
</dbReference>
<dbReference type="InterPro" id="IPR004396">
    <property type="entry name" value="ATPase_YchF/OLA1"/>
</dbReference>
<dbReference type="InterPro" id="IPR012675">
    <property type="entry name" value="Beta-grasp_dom_sf"/>
</dbReference>
<dbReference type="InterPro" id="IPR031167">
    <property type="entry name" value="G_OBG"/>
</dbReference>
<dbReference type="InterPro" id="IPR006073">
    <property type="entry name" value="GTP-bd"/>
</dbReference>
<dbReference type="InterPro" id="IPR027417">
    <property type="entry name" value="P-loop_NTPase"/>
</dbReference>
<dbReference type="InterPro" id="IPR004095">
    <property type="entry name" value="TGS"/>
</dbReference>
<dbReference type="InterPro" id="IPR012676">
    <property type="entry name" value="TGS-like"/>
</dbReference>
<dbReference type="InterPro" id="IPR023192">
    <property type="entry name" value="TGS-like_dom_sf"/>
</dbReference>
<dbReference type="InterPro" id="IPR013029">
    <property type="entry name" value="YchF_C"/>
</dbReference>
<dbReference type="InterPro" id="IPR041706">
    <property type="entry name" value="YchF_N"/>
</dbReference>
<dbReference type="NCBIfam" id="TIGR00092">
    <property type="entry name" value="redox-regulated ATPase YchF"/>
    <property type="match status" value="1"/>
</dbReference>
<dbReference type="PANTHER" id="PTHR23305">
    <property type="entry name" value="OBG GTPASE FAMILY"/>
    <property type="match status" value="1"/>
</dbReference>
<dbReference type="PANTHER" id="PTHR23305:SF11">
    <property type="entry name" value="OBG-LIKE ATPASE 1"/>
    <property type="match status" value="1"/>
</dbReference>
<dbReference type="Pfam" id="PF01926">
    <property type="entry name" value="MMR_HSR1"/>
    <property type="match status" value="1"/>
</dbReference>
<dbReference type="Pfam" id="PF06071">
    <property type="entry name" value="YchF-GTPase_C"/>
    <property type="match status" value="1"/>
</dbReference>
<dbReference type="PIRSF" id="PIRSF006641">
    <property type="entry name" value="CHP00092"/>
    <property type="match status" value="1"/>
</dbReference>
<dbReference type="PRINTS" id="PR00326">
    <property type="entry name" value="GTP1OBG"/>
</dbReference>
<dbReference type="SUPFAM" id="SSF52540">
    <property type="entry name" value="P-loop containing nucleoside triphosphate hydrolases"/>
    <property type="match status" value="1"/>
</dbReference>
<dbReference type="SUPFAM" id="SSF81271">
    <property type="entry name" value="TGS-like"/>
    <property type="match status" value="1"/>
</dbReference>
<dbReference type="PROSITE" id="PS51710">
    <property type="entry name" value="G_OBG"/>
    <property type="match status" value="1"/>
</dbReference>
<dbReference type="PROSITE" id="PS51880">
    <property type="entry name" value="TGS"/>
    <property type="match status" value="1"/>
</dbReference>
<feature type="chain" id="PRO_0000433306" description="Obg-like ATPase 1">
    <location>
        <begin position="1"/>
        <end position="394"/>
    </location>
</feature>
<feature type="domain" description="OBG-type G" evidence="3">
    <location>
        <begin position="25"/>
        <end position="282"/>
    </location>
</feature>
<feature type="domain" description="TGS" evidence="4">
    <location>
        <begin position="303"/>
        <end position="386"/>
    </location>
</feature>
<feature type="binding site" evidence="2">
    <location>
        <begin position="34"/>
        <end position="39"/>
    </location>
    <ligand>
        <name>ATP</name>
        <dbReference type="ChEBI" id="CHEBI:30616"/>
    </ligand>
</feature>
<feature type="binding site" evidence="3">
    <location>
        <position position="38"/>
    </location>
    <ligand>
        <name>Mg(2+)</name>
        <dbReference type="ChEBI" id="CHEBI:18420"/>
    </ligand>
</feature>
<feature type="binding site" evidence="3">
    <location>
        <begin position="56"/>
        <end position="60"/>
    </location>
    <ligand>
        <name>ATP</name>
        <dbReference type="ChEBI" id="CHEBI:30616"/>
    </ligand>
</feature>
<feature type="binding site" evidence="3">
    <location>
        <position position="58"/>
    </location>
    <ligand>
        <name>Mg(2+)</name>
        <dbReference type="ChEBI" id="CHEBI:18420"/>
    </ligand>
</feature>
<feature type="binding site" evidence="3">
    <location>
        <begin position="94"/>
        <end position="97"/>
    </location>
    <ligand>
        <name>ATP</name>
        <dbReference type="ChEBI" id="CHEBI:30616"/>
    </ligand>
</feature>
<feature type="binding site" evidence="1">
    <location>
        <position position="129"/>
    </location>
    <ligand>
        <name>GTP</name>
        <dbReference type="ChEBI" id="CHEBI:37565"/>
    </ligand>
</feature>
<feature type="binding site" evidence="1">
    <location>
        <begin position="230"/>
        <end position="231"/>
    </location>
    <ligand>
        <name>ATP</name>
        <dbReference type="ChEBI" id="CHEBI:30616"/>
    </ligand>
</feature>
<feature type="binding site" evidence="2">
    <location>
        <position position="231"/>
    </location>
    <ligand>
        <name>ATP</name>
        <dbReference type="ChEBI" id="CHEBI:30616"/>
    </ligand>
</feature>
<feature type="binding site" evidence="3">
    <location>
        <begin position="263"/>
        <end position="265"/>
    </location>
    <ligand>
        <name>ATP</name>
        <dbReference type="ChEBI" id="CHEBI:30616"/>
    </ligand>
</feature>
<feature type="binding site" evidence="3">
    <location>
        <begin position="263"/>
        <end position="265"/>
    </location>
    <ligand>
        <name>GTP</name>
        <dbReference type="ChEBI" id="CHEBI:37565"/>
    </ligand>
</feature>
<feature type="mutagenesis site" description="Abolishes binding to ATP, but has no effect on binding to GTP; abolishes its function as negative regulator of disease resistance." evidence="6">
    <original>LNE</original>
    <variation>KSD</variation>
    <location>
        <begin position="231"/>
        <end position="233"/>
    </location>
</feature>
<feature type="sequence conflict" description="In Ref. 4; AAM63059." evidence="8" ref="4">
    <original>V</original>
    <variation>F</variation>
    <location>
        <position position="375"/>
    </location>
</feature>
<feature type="strand" evidence="12">
    <location>
        <begin position="26"/>
        <end position="30"/>
    </location>
</feature>
<feature type="helix" evidence="12">
    <location>
        <begin position="37"/>
        <end position="46"/>
    </location>
</feature>
<feature type="helix" evidence="12">
    <location>
        <begin position="51"/>
        <end position="53"/>
    </location>
</feature>
<feature type="strand" evidence="12">
    <location>
        <begin position="63"/>
        <end position="67"/>
    </location>
</feature>
<feature type="helix" evidence="12">
    <location>
        <begin position="71"/>
        <end position="80"/>
    </location>
</feature>
<feature type="strand" evidence="12">
    <location>
        <begin position="83"/>
        <end position="86"/>
    </location>
</feature>
<feature type="strand" evidence="12">
    <location>
        <begin position="89"/>
        <end position="94"/>
    </location>
</feature>
<feature type="helix" evidence="12">
    <location>
        <begin position="114"/>
        <end position="118"/>
    </location>
</feature>
<feature type="strand" evidence="12">
    <location>
        <begin position="120"/>
        <end position="127"/>
    </location>
</feature>
<feature type="strand" evidence="12">
    <location>
        <begin position="132"/>
        <end position="134"/>
    </location>
</feature>
<feature type="helix" evidence="12">
    <location>
        <begin position="143"/>
        <end position="175"/>
    </location>
</feature>
<feature type="helix" evidence="12">
    <location>
        <begin position="179"/>
        <end position="196"/>
    </location>
</feature>
<feature type="helix" evidence="12">
    <location>
        <begin position="201"/>
        <end position="203"/>
    </location>
</feature>
<feature type="helix" evidence="12">
    <location>
        <begin position="208"/>
        <end position="217"/>
    </location>
</feature>
<feature type="helix" evidence="12">
    <location>
        <begin position="220"/>
        <end position="222"/>
    </location>
</feature>
<feature type="strand" evidence="12">
    <location>
        <begin position="225"/>
        <end position="230"/>
    </location>
</feature>
<feature type="helix" evidence="12">
    <location>
        <begin position="233"/>
        <end position="238"/>
    </location>
</feature>
<feature type="helix" evidence="12">
    <location>
        <begin position="244"/>
        <end position="253"/>
    </location>
</feature>
<feature type="strand" evidence="12">
    <location>
        <begin position="259"/>
        <end position="262"/>
    </location>
</feature>
<feature type="helix" evidence="12">
    <location>
        <begin position="264"/>
        <end position="272"/>
    </location>
</feature>
<feature type="helix" evidence="12">
    <location>
        <begin position="275"/>
        <end position="285"/>
    </location>
</feature>
<feature type="helix" evidence="12">
    <location>
        <begin position="291"/>
        <end position="297"/>
    </location>
</feature>
<feature type="strand" evidence="12">
    <location>
        <begin position="304"/>
        <end position="321"/>
    </location>
</feature>
<feature type="helix" evidence="12">
    <location>
        <begin position="326"/>
        <end position="333"/>
    </location>
</feature>
<feature type="helix" evidence="12">
    <location>
        <begin position="335"/>
        <end position="339"/>
    </location>
</feature>
<feature type="strand" evidence="12">
    <location>
        <begin position="341"/>
        <end position="347"/>
    </location>
</feature>
<feature type="helix" evidence="12">
    <location>
        <begin position="349"/>
        <end position="355"/>
    </location>
</feature>
<feature type="helix" evidence="12">
    <location>
        <begin position="358"/>
        <end position="363"/>
    </location>
</feature>
<feature type="strand" evidence="12">
    <location>
        <begin position="368"/>
        <end position="370"/>
    </location>
</feature>
<feature type="strand" evidence="12">
    <location>
        <begin position="381"/>
        <end position="386"/>
    </location>
</feature>
<gene>
    <name evidence="7" type="primary">YchF1</name>
    <name evidence="9" type="ordered locus">At1g30580</name>
    <name evidence="10" type="ORF">T5I8.3</name>
</gene>
<comment type="function">
    <text evidence="1 2 5 6">Hydrolyzes ATP, and can also hydrolyze GTP with lower efficiency. Has lower affinity for GTP (Potential). Exhibits GTPase activity (By similarity). Confers sensitivity to salinity stress by suppressing the anti-oxidation enzymatic activities and increasing lipid peroxidation thus leading to the accumulation of reactive oxygen species (ROS) (PubMed:23550829). Acts as a negative regulator of disease resistance against bacterial pathogen (PubMed:26912459).</text>
</comment>
<comment type="cofactor">
    <cofactor evidence="3">
        <name>Mg(2+)</name>
        <dbReference type="ChEBI" id="CHEBI:18420"/>
    </cofactor>
</comment>
<comment type="activity regulation">
    <text evidence="1">Activated by GAP1.</text>
</comment>
<comment type="subunit">
    <text evidence="2 5">Monomer (Potential). Interacts with CAR4/GAP1 (PubMed:23550829).</text>
</comment>
<comment type="subcellular location">
    <subcellularLocation>
        <location evidence="2">Cytoplasm</location>
    </subcellularLocation>
    <subcellularLocation>
        <location evidence="5">Cytoplasm</location>
        <location evidence="5">Cytosol</location>
    </subcellularLocation>
    <text evidence="5">Localized mainly in the cytosol under NaCl treatment, but translocates to the plasma membrane upon wounding.</text>
</comment>
<comment type="disruption phenotype">
    <text evidence="5">Increased tolerance to salinity stress.</text>
</comment>
<comment type="miscellaneous">
    <text evidence="6">Plants over-expressing OLA1 exhibit enhanced susceptibility to the bacterial pathogen Pseudomonas syringae pv. tomato strain DC3000.</text>
</comment>
<comment type="similarity">
    <text evidence="2">Belongs to the TRAFAC class OBG-HflX-like GTPase superfamily. OBG GTPase family. YchF/OLA1 subfamily.</text>
</comment>